<name>EFR3B_DANRE</name>
<keyword id="KW-1003">Cell membrane</keyword>
<keyword id="KW-0449">Lipoprotein</keyword>
<keyword id="KW-0472">Membrane</keyword>
<keyword id="KW-0564">Palmitate</keyword>
<keyword id="KW-1185">Reference proteome</keyword>
<organism>
    <name type="scientific">Danio rerio</name>
    <name type="common">Zebrafish</name>
    <name type="synonym">Brachydanio rerio</name>
    <dbReference type="NCBI Taxonomy" id="7955"/>
    <lineage>
        <taxon>Eukaryota</taxon>
        <taxon>Metazoa</taxon>
        <taxon>Chordata</taxon>
        <taxon>Craniata</taxon>
        <taxon>Vertebrata</taxon>
        <taxon>Euteleostomi</taxon>
        <taxon>Actinopterygii</taxon>
        <taxon>Neopterygii</taxon>
        <taxon>Teleostei</taxon>
        <taxon>Ostariophysi</taxon>
        <taxon>Cypriniformes</taxon>
        <taxon>Danionidae</taxon>
        <taxon>Danioninae</taxon>
        <taxon>Danio</taxon>
    </lineage>
</organism>
<gene>
    <name type="primary">efr3b</name>
    <name type="ORF">si:ch211-203k16.1</name>
    <name type="ORF">si:ch211-215m21.18</name>
</gene>
<sequence length="816" mass="91960">MTGVCGCCGALRPRYKRLVDNIFPEDPEDGLVKANMEKLTFYALSAPEKLDRIGAYLSERLSRDVARHRYGYVCIAMEALDQLLMACHCQSINLFVESFLKMVRKLLEADKPNLQILGTNSFVKFANIEEDTPSYHRSYDFFVSRFSEMCHSGYEDPDIRTKIRMAGIKGLQGVVRKTVNDELQANIWDPQHMDKIVPSLLFNLQSGEGTESRSPSPLQASEKEKESPAELTERCFRELLGRAAYGNIKNAVTPVLMHLDNHSLWEGKTFAVRCFKIIMYSIQSQHSHLVIQQLLGHLDANSKSSATVRAGIVEVLLEVAAIAASGSVGPTVLEVFNTLLRHLRLSVDYELTGSYDCTNIGTKIIKEHEERQLQEAVIRTIGSFANTLPTYQRSEVMLFIMGKVPIPGLHPTLPSIGSGPEGNRMIQVMLLKSLRQVTCGFQTTNMLTALPNSFLDPMLSFALLEDAEIRLLVLEILVSLIDRHDNLPKFSNISIISDISVLKLKVDKCSRQDNLFMKKHAQHLYRHIYLCSKEQSSVQPHFEKLYSLLALISMELANEEVVVDLIRVALALQDLALSSEEMLPVYNRCAIHALSSAYLNLISQLTTVPAFCQHVHEVIEMRQKEIPYLLPEDVFIENPKIPKTLEKLEGDVLFQQAKITEVLGGSGYNTERLATPYVPQFTDEDRLSKRKSIGETISLQVEVDSRNSPEKEERTPAEEITFETLKNAIVDSVGVEEQEKERRRQVVEKFQKAPFEEIAAHCGARATMLQSKLNQIFEITIRPPPSPSGTITSSYGQTQSRSVPVYEMKFPDLCVY</sequence>
<reference key="1">
    <citation type="journal article" date="2013" name="Nature">
        <title>The zebrafish reference genome sequence and its relationship to the human genome.</title>
        <authorList>
            <person name="Howe K."/>
            <person name="Clark M.D."/>
            <person name="Torroja C.F."/>
            <person name="Torrance J."/>
            <person name="Berthelot C."/>
            <person name="Muffato M."/>
            <person name="Collins J.E."/>
            <person name="Humphray S."/>
            <person name="McLaren K."/>
            <person name="Matthews L."/>
            <person name="McLaren S."/>
            <person name="Sealy I."/>
            <person name="Caccamo M."/>
            <person name="Churcher C."/>
            <person name="Scott C."/>
            <person name="Barrett J.C."/>
            <person name="Koch R."/>
            <person name="Rauch G.J."/>
            <person name="White S."/>
            <person name="Chow W."/>
            <person name="Kilian B."/>
            <person name="Quintais L.T."/>
            <person name="Guerra-Assuncao J.A."/>
            <person name="Zhou Y."/>
            <person name="Gu Y."/>
            <person name="Yen J."/>
            <person name="Vogel J.H."/>
            <person name="Eyre T."/>
            <person name="Redmond S."/>
            <person name="Banerjee R."/>
            <person name="Chi J."/>
            <person name="Fu B."/>
            <person name="Langley E."/>
            <person name="Maguire S.F."/>
            <person name="Laird G.K."/>
            <person name="Lloyd D."/>
            <person name="Kenyon E."/>
            <person name="Donaldson S."/>
            <person name="Sehra H."/>
            <person name="Almeida-King J."/>
            <person name="Loveland J."/>
            <person name="Trevanion S."/>
            <person name="Jones M."/>
            <person name="Quail M."/>
            <person name="Willey D."/>
            <person name="Hunt A."/>
            <person name="Burton J."/>
            <person name="Sims S."/>
            <person name="McLay K."/>
            <person name="Plumb B."/>
            <person name="Davis J."/>
            <person name="Clee C."/>
            <person name="Oliver K."/>
            <person name="Clark R."/>
            <person name="Riddle C."/>
            <person name="Elliot D."/>
            <person name="Threadgold G."/>
            <person name="Harden G."/>
            <person name="Ware D."/>
            <person name="Begum S."/>
            <person name="Mortimore B."/>
            <person name="Kerry G."/>
            <person name="Heath P."/>
            <person name="Phillimore B."/>
            <person name="Tracey A."/>
            <person name="Corby N."/>
            <person name="Dunn M."/>
            <person name="Johnson C."/>
            <person name="Wood J."/>
            <person name="Clark S."/>
            <person name="Pelan S."/>
            <person name="Griffiths G."/>
            <person name="Smith M."/>
            <person name="Glithero R."/>
            <person name="Howden P."/>
            <person name="Barker N."/>
            <person name="Lloyd C."/>
            <person name="Stevens C."/>
            <person name="Harley J."/>
            <person name="Holt K."/>
            <person name="Panagiotidis G."/>
            <person name="Lovell J."/>
            <person name="Beasley H."/>
            <person name="Henderson C."/>
            <person name="Gordon D."/>
            <person name="Auger K."/>
            <person name="Wright D."/>
            <person name="Collins J."/>
            <person name="Raisen C."/>
            <person name="Dyer L."/>
            <person name="Leung K."/>
            <person name="Robertson L."/>
            <person name="Ambridge K."/>
            <person name="Leongamornlert D."/>
            <person name="McGuire S."/>
            <person name="Gilderthorp R."/>
            <person name="Griffiths C."/>
            <person name="Manthravadi D."/>
            <person name="Nichol S."/>
            <person name="Barker G."/>
            <person name="Whitehead S."/>
            <person name="Kay M."/>
            <person name="Brown J."/>
            <person name="Murnane C."/>
            <person name="Gray E."/>
            <person name="Humphries M."/>
            <person name="Sycamore N."/>
            <person name="Barker D."/>
            <person name="Saunders D."/>
            <person name="Wallis J."/>
            <person name="Babbage A."/>
            <person name="Hammond S."/>
            <person name="Mashreghi-Mohammadi M."/>
            <person name="Barr L."/>
            <person name="Martin S."/>
            <person name="Wray P."/>
            <person name="Ellington A."/>
            <person name="Matthews N."/>
            <person name="Ellwood M."/>
            <person name="Woodmansey R."/>
            <person name="Clark G."/>
            <person name="Cooper J."/>
            <person name="Tromans A."/>
            <person name="Grafham D."/>
            <person name="Skuce C."/>
            <person name="Pandian R."/>
            <person name="Andrews R."/>
            <person name="Harrison E."/>
            <person name="Kimberley A."/>
            <person name="Garnett J."/>
            <person name="Fosker N."/>
            <person name="Hall R."/>
            <person name="Garner P."/>
            <person name="Kelly D."/>
            <person name="Bird C."/>
            <person name="Palmer S."/>
            <person name="Gehring I."/>
            <person name="Berger A."/>
            <person name="Dooley C.M."/>
            <person name="Ersan-Urun Z."/>
            <person name="Eser C."/>
            <person name="Geiger H."/>
            <person name="Geisler M."/>
            <person name="Karotki L."/>
            <person name="Kirn A."/>
            <person name="Konantz J."/>
            <person name="Konantz M."/>
            <person name="Oberlander M."/>
            <person name="Rudolph-Geiger S."/>
            <person name="Teucke M."/>
            <person name="Lanz C."/>
            <person name="Raddatz G."/>
            <person name="Osoegawa K."/>
            <person name="Zhu B."/>
            <person name="Rapp A."/>
            <person name="Widaa S."/>
            <person name="Langford C."/>
            <person name="Yang F."/>
            <person name="Schuster S.C."/>
            <person name="Carter N.P."/>
            <person name="Harrow J."/>
            <person name="Ning Z."/>
            <person name="Herrero J."/>
            <person name="Searle S.M."/>
            <person name="Enright A."/>
            <person name="Geisler R."/>
            <person name="Plasterk R.H."/>
            <person name="Lee C."/>
            <person name="Westerfield M."/>
            <person name="de Jong P.J."/>
            <person name="Zon L.I."/>
            <person name="Postlethwait J.H."/>
            <person name="Nusslein-Volhard C."/>
            <person name="Hubbard T.J."/>
            <person name="Roest Crollius H."/>
            <person name="Rogers J."/>
            <person name="Stemple D.L."/>
        </authorList>
    </citation>
    <scope>NUCLEOTIDE SEQUENCE [LARGE SCALE GENOMIC DNA]</scope>
    <source>
        <strain>Tuebingen</strain>
    </source>
</reference>
<comment type="function">
    <text evidence="1">Component of a complex required to localize phosphatidylinositol 4-kinase (PI4K) to the plasma membrane. The complex acts as a regulator of phosphatidylinositol 4-phosphate (PtdIns(4)P) synthesis. In the complex, efr3b probably acts as the membrane-anchoring component.</text>
</comment>
<comment type="subunit">
    <text evidence="1">Component of a phosphatidylinositol 4-kinase (PI4K) complex.</text>
</comment>
<comment type="subcellular location">
    <subcellularLocation>
        <location evidence="1">Cell membrane</location>
        <topology evidence="1">Lipid-anchor</topology>
    </subcellularLocation>
    <text evidence="1">Palmitoylation anchors the protein to the plasma membrane.</text>
</comment>
<comment type="PTM">
    <text evidence="1">Palmitoylated at its N-terminus, anchoring the protein to the plasma membrane.</text>
</comment>
<comment type="similarity">
    <text evidence="3">Belongs to the EFR3 family.</text>
</comment>
<feature type="chain" id="PRO_0000312297" description="Protein EFR3 homolog B">
    <location>
        <begin position="1"/>
        <end position="816"/>
    </location>
</feature>
<feature type="region of interest" description="Disordered" evidence="2">
    <location>
        <begin position="206"/>
        <end position="230"/>
    </location>
</feature>
<feature type="compositionally biased region" description="Polar residues" evidence="2">
    <location>
        <begin position="206"/>
        <end position="219"/>
    </location>
</feature>
<feature type="compositionally biased region" description="Basic and acidic residues" evidence="2">
    <location>
        <begin position="221"/>
        <end position="230"/>
    </location>
</feature>
<proteinExistence type="inferred from homology"/>
<dbReference type="EMBL" id="AL845420">
    <property type="protein sequence ID" value="CAI11752.2"/>
    <property type="molecule type" value="Genomic_DNA"/>
</dbReference>
<dbReference type="EMBL" id="AL928995">
    <property type="protein sequence ID" value="CAI11752.2"/>
    <property type="status" value="JOINED"/>
    <property type="molecule type" value="Genomic_DNA"/>
</dbReference>
<dbReference type="RefSeq" id="XP_005170258.1">
    <property type="nucleotide sequence ID" value="XM_005170201.3"/>
</dbReference>
<dbReference type="FunCoup" id="Q5SPP5">
    <property type="interactions" value="1666"/>
</dbReference>
<dbReference type="STRING" id="7955.ENSDARP00000112891"/>
<dbReference type="PaxDb" id="7955-ENSDARP00000112891"/>
<dbReference type="AGR" id="ZFIN:ZDB-GENE-041014-293"/>
<dbReference type="ZFIN" id="ZDB-GENE-041014-293">
    <property type="gene designation" value="efr3bb"/>
</dbReference>
<dbReference type="eggNOG" id="KOG1877">
    <property type="taxonomic scope" value="Eukaryota"/>
</dbReference>
<dbReference type="HOGENOM" id="CLU_012674_1_0_1"/>
<dbReference type="InParanoid" id="Q5SPP5"/>
<dbReference type="OrthoDB" id="19232at2759"/>
<dbReference type="PhylomeDB" id="Q5SPP5"/>
<dbReference type="TreeFam" id="TF314098"/>
<dbReference type="PRO" id="PR:Q5SPP5"/>
<dbReference type="Proteomes" id="UP000000437">
    <property type="component" value="Chromosome 20"/>
</dbReference>
<dbReference type="GO" id="GO:0005886">
    <property type="term" value="C:plasma membrane"/>
    <property type="evidence" value="ECO:0000250"/>
    <property type="project" value="UniProtKB"/>
</dbReference>
<dbReference type="GO" id="GO:0046854">
    <property type="term" value="P:phosphatidylinositol phosphate biosynthetic process"/>
    <property type="evidence" value="ECO:0000250"/>
    <property type="project" value="UniProtKB"/>
</dbReference>
<dbReference type="GO" id="GO:0072659">
    <property type="term" value="P:protein localization to plasma membrane"/>
    <property type="evidence" value="ECO:0000250"/>
    <property type="project" value="UniProtKB"/>
</dbReference>
<dbReference type="FunFam" id="1.25.10.10:FF:000393">
    <property type="entry name" value="EFR3 homolog Bb (S. cerevisiae)"/>
    <property type="match status" value="1"/>
</dbReference>
<dbReference type="Gene3D" id="1.25.10.10">
    <property type="entry name" value="Leucine-rich Repeat Variant"/>
    <property type="match status" value="1"/>
</dbReference>
<dbReference type="InterPro" id="IPR011989">
    <property type="entry name" value="ARM-like"/>
</dbReference>
<dbReference type="InterPro" id="IPR016024">
    <property type="entry name" value="ARM-type_fold"/>
</dbReference>
<dbReference type="InterPro" id="IPR049152">
    <property type="entry name" value="EFR3-like_ARM"/>
</dbReference>
<dbReference type="InterPro" id="IPR051851">
    <property type="entry name" value="EFR3_Homologs"/>
</dbReference>
<dbReference type="PANTHER" id="PTHR12444:SF4">
    <property type="entry name" value="PROTEIN EFR3 HOMOLOG B"/>
    <property type="match status" value="1"/>
</dbReference>
<dbReference type="PANTHER" id="PTHR12444">
    <property type="entry name" value="PROTEIN EFR3 HOMOLOG CMP44E"/>
    <property type="match status" value="1"/>
</dbReference>
<dbReference type="Pfam" id="PF21052">
    <property type="entry name" value="EFR3_ARM"/>
    <property type="match status" value="1"/>
</dbReference>
<dbReference type="SUPFAM" id="SSF48371">
    <property type="entry name" value="ARM repeat"/>
    <property type="match status" value="1"/>
</dbReference>
<evidence type="ECO:0000250" key="1">
    <source>
        <dbReference type="UniProtKB" id="Q9Y2G0"/>
    </source>
</evidence>
<evidence type="ECO:0000256" key="2">
    <source>
        <dbReference type="SAM" id="MobiDB-lite"/>
    </source>
</evidence>
<evidence type="ECO:0000305" key="3"/>
<accession>Q5SPP5</accession>
<protein>
    <recommendedName>
        <fullName>Protein EFR3 homolog B</fullName>
    </recommendedName>
</protein>